<protein>
    <recommendedName>
        <fullName evidence="1">Large ribosomal subunit protein bL19</fullName>
    </recommendedName>
    <alternativeName>
        <fullName evidence="2">50S ribosomal protein L19</fullName>
    </alternativeName>
</protein>
<proteinExistence type="inferred from homology"/>
<evidence type="ECO:0000255" key="1">
    <source>
        <dbReference type="HAMAP-Rule" id="MF_00402"/>
    </source>
</evidence>
<evidence type="ECO:0000305" key="2"/>
<reference key="1">
    <citation type="journal article" date="2008" name="Appl. Environ. Microbiol.">
        <title>The genome of Polaromonas sp. strain JS666: insights into the evolution of a hydrocarbon- and xenobiotic-degrading bacterium, and features of relevance to biotechnology.</title>
        <authorList>
            <person name="Mattes T.E."/>
            <person name="Alexander A.K."/>
            <person name="Richardson P.M."/>
            <person name="Munk A.C."/>
            <person name="Han C.S."/>
            <person name="Stothard P."/>
            <person name="Coleman N.V."/>
        </authorList>
    </citation>
    <scope>NUCLEOTIDE SEQUENCE [LARGE SCALE GENOMIC DNA]</scope>
    <source>
        <strain>JS666 / ATCC BAA-500</strain>
    </source>
</reference>
<accession>Q12CW3</accession>
<feature type="chain" id="PRO_1000049718" description="Large ribosomal subunit protein bL19">
    <location>
        <begin position="1"/>
        <end position="121"/>
    </location>
</feature>
<name>RL19_POLSJ</name>
<organism>
    <name type="scientific">Polaromonas sp. (strain JS666 / ATCC BAA-500)</name>
    <dbReference type="NCBI Taxonomy" id="296591"/>
    <lineage>
        <taxon>Bacteria</taxon>
        <taxon>Pseudomonadati</taxon>
        <taxon>Pseudomonadota</taxon>
        <taxon>Betaproteobacteria</taxon>
        <taxon>Burkholderiales</taxon>
        <taxon>Comamonadaceae</taxon>
        <taxon>Polaromonas</taxon>
    </lineage>
</organism>
<gene>
    <name evidence="1" type="primary">rplS</name>
    <name type="ordered locus">Bpro_1693</name>
</gene>
<sequence>MNLIQTLEQEEISRLNKTIPAYAPGDTVIVSVNVVEGTRKRVQAFEGVVIAKRNRGLNSSFIVRKVSNGEGVERTFQVYSPLIAKIEVKRRGDVRRAKLYYLRSRSGKSARIKEKLGAKAA</sequence>
<dbReference type="EMBL" id="CP000316">
    <property type="protein sequence ID" value="ABE43629.1"/>
    <property type="molecule type" value="Genomic_DNA"/>
</dbReference>
<dbReference type="RefSeq" id="WP_011482628.1">
    <property type="nucleotide sequence ID" value="NC_007948.1"/>
</dbReference>
<dbReference type="SMR" id="Q12CW3"/>
<dbReference type="STRING" id="296591.Bpro_1693"/>
<dbReference type="KEGG" id="pol:Bpro_1693"/>
<dbReference type="eggNOG" id="COG0335">
    <property type="taxonomic scope" value="Bacteria"/>
</dbReference>
<dbReference type="HOGENOM" id="CLU_103507_1_0_4"/>
<dbReference type="OrthoDB" id="9803541at2"/>
<dbReference type="Proteomes" id="UP000001983">
    <property type="component" value="Chromosome"/>
</dbReference>
<dbReference type="GO" id="GO:0022625">
    <property type="term" value="C:cytosolic large ribosomal subunit"/>
    <property type="evidence" value="ECO:0007669"/>
    <property type="project" value="TreeGrafter"/>
</dbReference>
<dbReference type="GO" id="GO:0003735">
    <property type="term" value="F:structural constituent of ribosome"/>
    <property type="evidence" value="ECO:0007669"/>
    <property type="project" value="InterPro"/>
</dbReference>
<dbReference type="GO" id="GO:0006412">
    <property type="term" value="P:translation"/>
    <property type="evidence" value="ECO:0007669"/>
    <property type="project" value="UniProtKB-UniRule"/>
</dbReference>
<dbReference type="FunFam" id="2.30.30.790:FF:000001">
    <property type="entry name" value="50S ribosomal protein L19"/>
    <property type="match status" value="1"/>
</dbReference>
<dbReference type="Gene3D" id="2.30.30.790">
    <property type="match status" value="1"/>
</dbReference>
<dbReference type="HAMAP" id="MF_00402">
    <property type="entry name" value="Ribosomal_bL19"/>
    <property type="match status" value="1"/>
</dbReference>
<dbReference type="InterPro" id="IPR001857">
    <property type="entry name" value="Ribosomal_bL19"/>
</dbReference>
<dbReference type="InterPro" id="IPR018257">
    <property type="entry name" value="Ribosomal_bL19_CS"/>
</dbReference>
<dbReference type="InterPro" id="IPR038657">
    <property type="entry name" value="Ribosomal_bL19_sf"/>
</dbReference>
<dbReference type="InterPro" id="IPR008991">
    <property type="entry name" value="Translation_prot_SH3-like_sf"/>
</dbReference>
<dbReference type="NCBIfam" id="TIGR01024">
    <property type="entry name" value="rplS_bact"/>
    <property type="match status" value="1"/>
</dbReference>
<dbReference type="PANTHER" id="PTHR15680:SF9">
    <property type="entry name" value="LARGE RIBOSOMAL SUBUNIT PROTEIN BL19M"/>
    <property type="match status" value="1"/>
</dbReference>
<dbReference type="PANTHER" id="PTHR15680">
    <property type="entry name" value="RIBOSOMAL PROTEIN L19"/>
    <property type="match status" value="1"/>
</dbReference>
<dbReference type="Pfam" id="PF01245">
    <property type="entry name" value="Ribosomal_L19"/>
    <property type="match status" value="1"/>
</dbReference>
<dbReference type="PIRSF" id="PIRSF002191">
    <property type="entry name" value="Ribosomal_L19"/>
    <property type="match status" value="1"/>
</dbReference>
<dbReference type="PRINTS" id="PR00061">
    <property type="entry name" value="RIBOSOMALL19"/>
</dbReference>
<dbReference type="SUPFAM" id="SSF50104">
    <property type="entry name" value="Translation proteins SH3-like domain"/>
    <property type="match status" value="1"/>
</dbReference>
<dbReference type="PROSITE" id="PS01015">
    <property type="entry name" value="RIBOSOMAL_L19"/>
    <property type="match status" value="1"/>
</dbReference>
<keyword id="KW-1185">Reference proteome</keyword>
<keyword id="KW-0687">Ribonucleoprotein</keyword>
<keyword id="KW-0689">Ribosomal protein</keyword>
<comment type="function">
    <text evidence="1">This protein is located at the 30S-50S ribosomal subunit interface and may play a role in the structure and function of the aminoacyl-tRNA binding site.</text>
</comment>
<comment type="similarity">
    <text evidence="1">Belongs to the bacterial ribosomal protein bL19 family.</text>
</comment>